<protein>
    <recommendedName>
        <fullName>GPI ethanolamine phosphate transferase 1</fullName>
        <ecNumber>2.-.-.-</ecNumber>
    </recommendedName>
</protein>
<name>MCD4_EREGS</name>
<comment type="function">
    <text evidence="1">Ethanolamine phosphate transferase involved in glycosylphosphatidylinositol-anchor biosynthesis. Transfers ethanolamine phosphate to the first alpha-1,4-linked mannose of the glycosylphosphatidylinositol precursor of GPI-anchor (By similarity).</text>
</comment>
<comment type="pathway">
    <text>Glycolipid biosynthesis; glycosylphosphatidylinositol-anchor biosynthesis.</text>
</comment>
<comment type="subcellular location">
    <subcellularLocation>
        <location evidence="1">Endoplasmic reticulum membrane</location>
        <topology evidence="1">Multi-pass membrane protein</topology>
    </subcellularLocation>
</comment>
<comment type="similarity">
    <text evidence="3">Belongs to the PIGG/PIGN/PIGO family. PIGN subfamily.</text>
</comment>
<accession>Q757X5</accession>
<dbReference type="EC" id="2.-.-.-"/>
<dbReference type="EMBL" id="AE016818">
    <property type="protein sequence ID" value="AAS52572.2"/>
    <property type="molecule type" value="Genomic_DNA"/>
</dbReference>
<dbReference type="RefSeq" id="NP_984748.2">
    <property type="nucleotide sequence ID" value="NM_210102.2"/>
</dbReference>
<dbReference type="SMR" id="Q757X5"/>
<dbReference type="FunCoup" id="Q757X5">
    <property type="interactions" value="505"/>
</dbReference>
<dbReference type="STRING" id="284811.Q757X5"/>
<dbReference type="GlyCosmos" id="Q757X5">
    <property type="glycosylation" value="6 sites, No reported glycans"/>
</dbReference>
<dbReference type="EnsemblFungi" id="AAS52572">
    <property type="protein sequence ID" value="AAS52572"/>
    <property type="gene ID" value="AGOS_AEL113C"/>
</dbReference>
<dbReference type="GeneID" id="4620935"/>
<dbReference type="KEGG" id="ago:AGOS_AEL113C"/>
<dbReference type="eggNOG" id="KOG2124">
    <property type="taxonomic scope" value="Eukaryota"/>
</dbReference>
<dbReference type="HOGENOM" id="CLU_007676_0_0_1"/>
<dbReference type="InParanoid" id="Q757X5"/>
<dbReference type="OMA" id="QSYFHRE"/>
<dbReference type="OrthoDB" id="2748310at2759"/>
<dbReference type="UniPathway" id="UPA00196"/>
<dbReference type="Proteomes" id="UP000000591">
    <property type="component" value="Chromosome V"/>
</dbReference>
<dbReference type="GO" id="GO:0005789">
    <property type="term" value="C:endoplasmic reticulum membrane"/>
    <property type="evidence" value="ECO:0000318"/>
    <property type="project" value="GO_Central"/>
</dbReference>
<dbReference type="GO" id="GO:0009277">
    <property type="term" value="C:fungal-type cell wall"/>
    <property type="evidence" value="ECO:0007669"/>
    <property type="project" value="EnsemblFungi"/>
</dbReference>
<dbReference type="GO" id="GO:0000324">
    <property type="term" value="C:fungal-type vacuole"/>
    <property type="evidence" value="ECO:0007669"/>
    <property type="project" value="EnsemblFungi"/>
</dbReference>
<dbReference type="GO" id="GO:0051377">
    <property type="term" value="F:mannose-ethanolamine phosphotransferase activity"/>
    <property type="evidence" value="ECO:0000318"/>
    <property type="project" value="GO_Central"/>
</dbReference>
<dbReference type="GO" id="GO:0015867">
    <property type="term" value="P:ATP transport"/>
    <property type="evidence" value="ECO:0007669"/>
    <property type="project" value="EnsemblFungi"/>
</dbReference>
<dbReference type="GO" id="GO:0071555">
    <property type="term" value="P:cell wall organization"/>
    <property type="evidence" value="ECO:0007669"/>
    <property type="project" value="UniProtKB-KW"/>
</dbReference>
<dbReference type="GO" id="GO:0006506">
    <property type="term" value="P:GPI anchor biosynthetic process"/>
    <property type="evidence" value="ECO:0000318"/>
    <property type="project" value="GO_Central"/>
</dbReference>
<dbReference type="CDD" id="cd16020">
    <property type="entry name" value="GPI_EPT_1"/>
    <property type="match status" value="1"/>
</dbReference>
<dbReference type="FunFam" id="3.40.720.10:FF:000015">
    <property type="entry name" value="GPI ethanolamine phosphate transferase 1"/>
    <property type="match status" value="1"/>
</dbReference>
<dbReference type="Gene3D" id="3.40.720.10">
    <property type="entry name" value="Alkaline Phosphatase, subunit A"/>
    <property type="match status" value="1"/>
</dbReference>
<dbReference type="InterPro" id="IPR017850">
    <property type="entry name" value="Alkaline_phosphatase_core_sf"/>
</dbReference>
<dbReference type="InterPro" id="IPR007070">
    <property type="entry name" value="GPI_EtnP_transferase_1"/>
</dbReference>
<dbReference type="InterPro" id="IPR017852">
    <property type="entry name" value="GPI_EtnP_transferase_1_C"/>
</dbReference>
<dbReference type="InterPro" id="IPR037671">
    <property type="entry name" value="PIGN_N"/>
</dbReference>
<dbReference type="InterPro" id="IPR000917">
    <property type="entry name" value="Sulfatase_N"/>
</dbReference>
<dbReference type="PANTHER" id="PTHR12250:SF0">
    <property type="entry name" value="GPI ETHANOLAMINE PHOSPHATE TRANSFERASE 1"/>
    <property type="match status" value="1"/>
</dbReference>
<dbReference type="PANTHER" id="PTHR12250">
    <property type="entry name" value="PHOSPHATIDYLINOSITOL GLYCAN, CLASS N"/>
    <property type="match status" value="1"/>
</dbReference>
<dbReference type="Pfam" id="PF04987">
    <property type="entry name" value="PigN"/>
    <property type="match status" value="1"/>
</dbReference>
<dbReference type="Pfam" id="PF00884">
    <property type="entry name" value="Sulfatase"/>
    <property type="match status" value="1"/>
</dbReference>
<dbReference type="SUPFAM" id="SSF53649">
    <property type="entry name" value="Alkaline phosphatase-like"/>
    <property type="match status" value="1"/>
</dbReference>
<gene>
    <name type="primary">MCD4</name>
    <name type="ordered locus">AEL113C</name>
</gene>
<proteinExistence type="inferred from homology"/>
<keyword id="KW-0961">Cell wall biogenesis/degradation</keyword>
<keyword id="KW-0256">Endoplasmic reticulum</keyword>
<keyword id="KW-0325">Glycoprotein</keyword>
<keyword id="KW-0337">GPI-anchor biosynthesis</keyword>
<keyword id="KW-0472">Membrane</keyword>
<keyword id="KW-1185">Reference proteome</keyword>
<keyword id="KW-0808">Transferase</keyword>
<keyword id="KW-0812">Transmembrane</keyword>
<keyword id="KW-1133">Transmembrane helix</keyword>
<evidence type="ECO:0000250" key="1"/>
<evidence type="ECO:0000255" key="2"/>
<evidence type="ECO:0000305" key="3"/>
<organism>
    <name type="scientific">Eremothecium gossypii (strain ATCC 10895 / CBS 109.51 / FGSC 9923 / NRRL Y-1056)</name>
    <name type="common">Yeast</name>
    <name type="synonym">Ashbya gossypii</name>
    <dbReference type="NCBI Taxonomy" id="284811"/>
    <lineage>
        <taxon>Eukaryota</taxon>
        <taxon>Fungi</taxon>
        <taxon>Dikarya</taxon>
        <taxon>Ascomycota</taxon>
        <taxon>Saccharomycotina</taxon>
        <taxon>Saccharomycetes</taxon>
        <taxon>Saccharomycetales</taxon>
        <taxon>Saccharomycetaceae</taxon>
        <taxon>Eremothecium</taxon>
    </lineage>
</organism>
<reference key="1">
    <citation type="journal article" date="2004" name="Science">
        <title>The Ashbya gossypii genome as a tool for mapping the ancient Saccharomyces cerevisiae genome.</title>
        <authorList>
            <person name="Dietrich F.S."/>
            <person name="Voegeli S."/>
            <person name="Brachat S."/>
            <person name="Lerch A."/>
            <person name="Gates K."/>
            <person name="Steiner S."/>
            <person name="Mohr C."/>
            <person name="Poehlmann R."/>
            <person name="Luedi P."/>
            <person name="Choi S."/>
            <person name="Wing R.A."/>
            <person name="Flavier A."/>
            <person name="Gaffney T.D."/>
            <person name="Philippsen P."/>
        </authorList>
    </citation>
    <scope>NUCLEOTIDE SEQUENCE [LARGE SCALE GENOMIC DNA]</scope>
    <source>
        <strain>ATCC 10895 / CBS 109.51 / FGSC 9923 / NRRL Y-1056</strain>
    </source>
</reference>
<reference key="2">
    <citation type="journal article" date="2013" name="G3 (Bethesda)">
        <title>Genomes of Ashbya fungi isolated from insects reveal four mating-type loci, numerous translocations, lack of transposons, and distinct gene duplications.</title>
        <authorList>
            <person name="Dietrich F.S."/>
            <person name="Voegeli S."/>
            <person name="Kuo S."/>
            <person name="Philippsen P."/>
        </authorList>
    </citation>
    <scope>GENOME REANNOTATION</scope>
    <scope>SEQUENCE REVISION TO 360</scope>
    <source>
        <strain>ATCC 10895 / CBS 109.51 / FGSC 9923 / NRRL Y-1056</strain>
    </source>
</reference>
<feature type="chain" id="PRO_0000246200" description="GPI ethanolamine phosphate transferase 1">
    <location>
        <begin position="1"/>
        <end position="925"/>
    </location>
</feature>
<feature type="topological domain" description="Cytoplasmic" evidence="2">
    <location>
        <begin position="1"/>
        <end position="6"/>
    </location>
</feature>
<feature type="transmembrane region" description="Helical" evidence="2">
    <location>
        <begin position="7"/>
        <end position="27"/>
    </location>
</feature>
<feature type="topological domain" description="Lumenal" evidence="2">
    <location>
        <begin position="28"/>
        <end position="457"/>
    </location>
</feature>
<feature type="transmembrane region" description="Helical" evidence="2">
    <location>
        <begin position="458"/>
        <end position="478"/>
    </location>
</feature>
<feature type="topological domain" description="Cytoplasmic" evidence="2">
    <location>
        <begin position="479"/>
        <end position="492"/>
    </location>
</feature>
<feature type="transmembrane region" description="Helical" evidence="2">
    <location>
        <begin position="493"/>
        <end position="510"/>
    </location>
</feature>
<feature type="topological domain" description="Lumenal" evidence="2">
    <location>
        <begin position="511"/>
        <end position="516"/>
    </location>
</feature>
<feature type="transmembrane region" description="Helical" evidence="2">
    <location>
        <begin position="517"/>
        <end position="537"/>
    </location>
</feature>
<feature type="topological domain" description="Cytoplasmic" evidence="2">
    <location>
        <begin position="538"/>
        <end position="547"/>
    </location>
</feature>
<feature type="transmembrane region" description="Helical" evidence="2">
    <location>
        <begin position="548"/>
        <end position="568"/>
    </location>
</feature>
<feature type="topological domain" description="Lumenal" evidence="2">
    <location>
        <begin position="569"/>
        <end position="574"/>
    </location>
</feature>
<feature type="transmembrane region" description="Helical" evidence="2">
    <location>
        <begin position="575"/>
        <end position="595"/>
    </location>
</feature>
<feature type="topological domain" description="Cytoplasmic" evidence="2">
    <location>
        <begin position="596"/>
        <end position="599"/>
    </location>
</feature>
<feature type="transmembrane region" description="Helical" evidence="2">
    <location>
        <begin position="600"/>
        <end position="620"/>
    </location>
</feature>
<feature type="topological domain" description="Lumenal" evidence="2">
    <location>
        <position position="621"/>
    </location>
</feature>
<feature type="transmembrane region" description="Helical" evidence="2">
    <location>
        <begin position="622"/>
        <end position="642"/>
    </location>
</feature>
<feature type="topological domain" description="Cytoplasmic" evidence="2">
    <location>
        <begin position="643"/>
        <end position="653"/>
    </location>
</feature>
<feature type="transmembrane region" description="Helical" evidence="2">
    <location>
        <begin position="654"/>
        <end position="674"/>
    </location>
</feature>
<feature type="topological domain" description="Lumenal" evidence="2">
    <location>
        <begin position="675"/>
        <end position="687"/>
    </location>
</feature>
<feature type="transmembrane region" description="Helical" evidence="2">
    <location>
        <begin position="688"/>
        <end position="708"/>
    </location>
</feature>
<feature type="topological domain" description="Cytoplasmic" evidence="2">
    <location>
        <begin position="709"/>
        <end position="719"/>
    </location>
</feature>
<feature type="transmembrane region" description="Helical" evidence="2">
    <location>
        <begin position="720"/>
        <end position="740"/>
    </location>
</feature>
<feature type="topological domain" description="Lumenal" evidence="2">
    <location>
        <begin position="741"/>
        <end position="775"/>
    </location>
</feature>
<feature type="transmembrane region" description="Helical" evidence="2">
    <location>
        <begin position="776"/>
        <end position="796"/>
    </location>
</feature>
<feature type="topological domain" description="Cytoplasmic" evidence="2">
    <location>
        <begin position="797"/>
        <end position="818"/>
    </location>
</feature>
<feature type="transmembrane region" description="Helical" evidence="2">
    <location>
        <begin position="819"/>
        <end position="839"/>
    </location>
</feature>
<feature type="topological domain" description="Lumenal" evidence="2">
    <location>
        <begin position="840"/>
        <end position="848"/>
    </location>
</feature>
<feature type="transmembrane region" description="Helical" evidence="2">
    <location>
        <begin position="849"/>
        <end position="869"/>
    </location>
</feature>
<feature type="topological domain" description="Cytoplasmic" evidence="2">
    <location>
        <begin position="870"/>
        <end position="885"/>
    </location>
</feature>
<feature type="transmembrane region" description="Helical" evidence="2">
    <location>
        <begin position="886"/>
        <end position="906"/>
    </location>
</feature>
<feature type="topological domain" description="Lumenal" evidence="2">
    <location>
        <begin position="907"/>
        <end position="925"/>
    </location>
</feature>
<feature type="glycosylation site" description="N-linked (GlcNAc...) asparagine" evidence="2">
    <location>
        <position position="90"/>
    </location>
</feature>
<feature type="glycosylation site" description="N-linked (GlcNAc...) asparagine" evidence="2">
    <location>
        <position position="138"/>
    </location>
</feature>
<feature type="glycosylation site" description="N-linked (GlcNAc...) asparagine" evidence="2">
    <location>
        <position position="198"/>
    </location>
</feature>
<feature type="glycosylation site" description="N-linked (GlcNAc...) asparagine" evidence="2">
    <location>
        <position position="286"/>
    </location>
</feature>
<feature type="glycosylation site" description="N-linked (GlcNAc...) asparagine" evidence="2">
    <location>
        <position position="312"/>
    </location>
</feature>
<feature type="glycosylation site" description="N-linked (GlcNAc...) asparagine" evidence="2">
    <location>
        <position position="358"/>
    </location>
</feature>
<sequence>MWNKHRLAFILVGLLFHLFYLRSIFDIYFVSPLVHGMRQFKSNEEPPAKRLFLIVGDGLRADTSFDKVKHPVTGKTEFLAPYLRSLVEHNATYGISHTRMPTESRPGHVAMIAGFYEDVSAVTKGWKENPVDFDSVFNQSTHTYSFGSPDILPMFKSGASDPTKVDAWMYGHEFEDFTQSSIELDAYVFRHMDALFRNATVDSKLRHEMMQDGNVFFLHLLGCDTAGHSYRPYSAEYYDNVKYIDSQLERLVPKVREFFGDDDTAFVFTADHGMSAFGSHGDGHPNNTRTPLVAWGAGLNRPVLNDVPVYDNYTENWDLAHVRRNDVNQADIASLMSYLIGLNYPTNSVGELPLAYVNGTERTKLNALYKNALSILEQYLVKETEMIQSQLVYKEYPKFAQKSHSSYIQEIEHLIDRIANGEEDLEPEAIALSEELMKTALEGLQYLTTYNWRFIRSIVTLGFIGWITYSFTIFLRLFILEKQYAMKTSPQNLASFGALTAALNYVLYYQRSPFNYYMYLLFPLFFWSQILTNSTILHDGIREMFKGVSMLQRIGICALIVSIYEGIVYGYFDRWIFTIIFNLLALYPFFCGIKDAKTNMFWGANSMALSIFTLFDAVKIESLTQINVSGLLLVASGLYALWRVSKKINSHTKIVILLQILLLAMMLAVTNKSVTSLQQRAGLPTDAKIAGWVILTLSLSLMPLLHYLKPSNDYQVRVLVIYLTFAPTFLILTISFESFFYLLFTNYLMLWIEIESKIKAQNIAKNSQNWLQLLRISIIGFFLLQFAFFGTGNVASISSFSLDSVYRLMPVFDPFPMGALLILKIMIPYILLSTALGIMNLKLNIKDYTVSSLILSTSDVLSLNFFYLLRTEGSWLDIGVTISNYCLAILSSLFMIVLELFSHFLLKNVRDNGMDIAASKQQKRH</sequence>